<organism>
    <name type="scientific">Hypomyces subiculosus</name>
    <name type="common">Nectria subiculosa</name>
    <dbReference type="NCBI Taxonomy" id="193393"/>
    <lineage>
        <taxon>Eukaryota</taxon>
        <taxon>Fungi</taxon>
        <taxon>Dikarya</taxon>
        <taxon>Ascomycota</taxon>
        <taxon>Pezizomycotina</taxon>
        <taxon>Sordariomycetes</taxon>
        <taxon>Hypocreomycetidae</taxon>
        <taxon>Hypocreales</taxon>
        <taxon>Hypocreaceae</taxon>
        <taxon>Hypomyces</taxon>
    </lineage>
</organism>
<comment type="function">
    <text evidence="5 8">FAD-binding monooxygenase; part of the gene cluster that mediates the biosynthesis of hypothemycin, a resorcylic acid lactone (RAL) that irreversibly inhibits a subset of protein kinases with a conserved cysteine in the ATP binding site such as human ERK2 (PubMed:18567690). The first step is performed by both PKSs hmp3 and hmp8 and leads to the production of 7',8'-dehydrozearalenol (DHZ) (PubMed:18567690, PubMed:20222707). The highly reducing PKS hpm8 synthesizes the reduced hexaketide (7S,11S,2E,8E)-7,11-dihydroxy-dodeca-2,8-dienoate, which is transferred downstream to the non-reducing PKS hpm3 (PubMed:20222707). Hpm3 then extends the reduced hexaketide to a nonaketide, after which regioselective cyclization and macrolactonization affords DHZ (PubMed:20222707). The next step is the conversion of DHZ into aigialomycin C and is performed by the O-methyltransferase hmp5, the FAD-binding monooxygenase hmp7, and the cytochrome P450 monooxygenase hmp1 (PubMed:18567690). The wide substrate tolerance of the hmp5 and hmp7 implies that the reactions from DHZ to aigialomycin C can occur in any order (PubMed:18567690). The steps from aigialomycin C to hypothemycin are less well established (PubMed:18567690). The FAD-linked oxidoreductase hmp9 presumably catalyzes oxidation of the C-6' hydroxyl to a ketone (PubMed:18567690). The timing of this oxidation is important, since the resulting enone functional group is a Michael acceptor that can react spontaneously with glutathione, an abundant metabolite in fungal cells (PubMed:18567690). The glutathione S-transferase hmp2 catalyzes cis-trans isomerization of the 7',8' double bond with equilibrium favoring the trans isomer (PubMed:18567690). The hpm6-encoded transporter might preferentially pump hypothemycin out of the cell relative to the trans isomer aigialomycin A. The cis-to-trans isomerization may be coupled with C-4' hydroxylation, since all known hypothemycin analogs containing the enone functional group also have hydroxyl groups at both C-4' and C-5' (PubMed:18567690).</text>
</comment>
<comment type="cofactor">
    <cofactor evidence="1">
        <name>FAD</name>
        <dbReference type="ChEBI" id="CHEBI:57692"/>
    </cofactor>
    <text evidence="1">Binds 1 FAD per subunit.</text>
</comment>
<comment type="pathway">
    <text evidence="5">Secondary metabolite biosynthesis.</text>
</comment>
<comment type="biotechnology">
    <text evidence="2 3 4 6 7 9 10 11">Hypothemycin is an antifungal agent that exhibits excellent activity against Peronophythora litchii, which could be helpful for the storage of harvest litchi fruit (PubMed:24106914). Hypothemycin is a strong inhibitor of a subset of MAP kinases such as human ERK2 (PubMed:18571434, PubMed:20118535, PubMed:26371861). It can therefore be used as an anti-cancer drug thanks to its inhibitory activity of Ras-mediated cellular signals (PubMed:10421424, PubMed:10595743). It can also inhibit Trypanosoma brucei kinase TbCLK1 which is a good candidate as a therapeutic target for African trypanosomiasis (PubMed:23853713). Finally, hypothemycin also has inhibitor activity of T cell activation (PubMed:10598882).</text>
</comment>
<comment type="similarity">
    <text evidence="13">Belongs to the FAD-binding monooxygenase family.</text>
</comment>
<feature type="chain" id="PRO_0000437602" description="FAD-binding monooxygenase hmp7">
    <location>
        <begin position="1"/>
        <end position="602"/>
    </location>
</feature>
<feature type="binding site" evidence="1">
    <location>
        <begin position="108"/>
        <end position="111"/>
    </location>
    <ligand>
        <name>FAD</name>
        <dbReference type="ChEBI" id="CHEBI:57692"/>
    </ligand>
</feature>
<feature type="binding site" evidence="1">
    <location>
        <begin position="118"/>
        <end position="120"/>
    </location>
    <ligand>
        <name>NADP(+)</name>
        <dbReference type="ChEBI" id="CHEBI:58349"/>
    </ligand>
</feature>
<feature type="binding site" evidence="1">
    <location>
        <begin position="120"/>
        <end position="121"/>
    </location>
    <ligand>
        <name>FAD</name>
        <dbReference type="ChEBI" id="CHEBI:57692"/>
    </ligand>
</feature>
<feature type="binding site" evidence="1">
    <location>
        <position position="126"/>
    </location>
    <ligand>
        <name>FAD</name>
        <dbReference type="ChEBI" id="CHEBI:57692"/>
    </ligand>
</feature>
<feature type="binding site" evidence="1">
    <location>
        <begin position="252"/>
        <end position="258"/>
    </location>
    <ligand>
        <name>NADP(+)</name>
        <dbReference type="ChEBI" id="CHEBI:58349"/>
    </ligand>
</feature>
<feature type="binding site" evidence="1">
    <location>
        <begin position="275"/>
        <end position="276"/>
    </location>
    <ligand>
        <name>NADP(+)</name>
        <dbReference type="ChEBI" id="CHEBI:58349"/>
    </ligand>
</feature>
<feature type="site" description="Transition state stabilizer" evidence="1">
    <location>
        <position position="390"/>
    </location>
</feature>
<protein>
    <recommendedName>
        <fullName evidence="12">FAD-binding monooxygenase hmp7</fullName>
        <shortName evidence="12">FMO hmp7</shortName>
        <ecNumber evidence="13">1.14.13.-</ecNumber>
    </recommendedName>
    <alternativeName>
        <fullName evidence="12">Hypothemycin biosynthesis cluster protein hpm7</fullName>
    </alternativeName>
</protein>
<reference key="1">
    <citation type="journal article" date="2008" name="Appl. Environ. Microbiol.">
        <title>Genes for the biosynthesis of the fungal polyketides hypothemycin from Hypomyces subiculosus and radicicol from Pochonia chlamydosporia.</title>
        <authorList>
            <person name="Reeves C.D."/>
            <person name="Hu Z."/>
            <person name="Reid R."/>
            <person name="Kealey J.T."/>
        </authorList>
    </citation>
    <scope>NUCLEOTIDE SEQUENCE [GENOMIC DNA]</scope>
    <scope>FUNCTION</scope>
    <source>
        <strain>DSM11931</strain>
        <strain>DSM11932</strain>
    </source>
</reference>
<reference key="2">
    <citation type="journal article" date="1999" name="Immunopharmacology">
        <title>Hypothemycin inhibits the proliferative response and modulates the production of cytokines during T cell activation.</title>
        <authorList>
            <person name="Camacho R."/>
            <person name="Staruch M.J."/>
            <person name="DaSilva C."/>
            <person name="Koprak S."/>
            <person name="Sewell T."/>
            <person name="Salituro G."/>
            <person name="Dumont F.J."/>
        </authorList>
    </citation>
    <scope>BIOTECHNOLOGY</scope>
</reference>
<reference key="3">
    <citation type="journal article" date="1999" name="Jpn. J. Cancer Res.">
        <title>Antitumor efficacy of hypothemycin, a new Ras-signaling inhibitor.</title>
        <authorList>
            <person name="Tanaka H."/>
            <person name="Nishida K."/>
            <person name="Sugita K."/>
            <person name="Yoshioka T."/>
        </authorList>
    </citation>
    <scope>BIOTECHNOLOGY</scope>
</reference>
<reference key="4">
    <citation type="journal article" date="1999" name="Life Sci.">
        <title>Suppression of oncogenic transformation by hypothemycin associated with accelerated cyclin D1 degradation through ubiquitin-proteasome pathway.</title>
        <authorList>
            <person name="Sonoda H."/>
            <person name="Omi K."/>
            <person name="Hojo K."/>
            <person name="Nishida K."/>
            <person name="Omura S."/>
            <person name="Sugita K."/>
        </authorList>
    </citation>
    <scope>BIOTECHNOLOGY</scope>
</reference>
<reference key="5">
    <citation type="journal article" date="2008" name="J. Struct. Biol.">
        <title>Molecular modeling and crystal structure of ERK2-hypothemycin complexes.</title>
        <authorList>
            <person name="Rastelli G."/>
            <person name="Rosenfeld R."/>
            <person name="Reid R."/>
            <person name="Santi D.V."/>
        </authorList>
    </citation>
    <scope>BIOTECHNOLOGY</scope>
</reference>
<reference key="6">
    <citation type="journal article" date="2010" name="Biol. Pharm. Bull.">
        <title>The resorcylic acid lactone hypothemycin selectively inhibits the mitogen-activated protein kinase kinase-extracellular signal-regulated kinase pathway in cells.</title>
        <authorList>
            <person name="Fukazawa H."/>
            <person name="Ikeda Y."/>
            <person name="Fukuyama M."/>
            <person name="Suzuki T."/>
            <person name="Hori H."/>
            <person name="Okuda T."/>
            <person name="Uehara Y."/>
        </authorList>
    </citation>
    <scope>BIOTECHNOLOGY</scope>
</reference>
<reference key="7">
    <citation type="journal article" date="2010" name="J. Am. Chem. Soc.">
        <title>Enzymatic synthesis of resorcylic acid lactones by cooperation of fungal iterative polyketide synthases involved in hypothemycin biosynthesis.</title>
        <authorList>
            <person name="Zhou H."/>
            <person name="Qiao K."/>
            <person name="Gao Z."/>
            <person name="Meehan M.J."/>
            <person name="Li J.W."/>
            <person name="Zhao X."/>
            <person name="Dorrestein P.C."/>
            <person name="Vederas J.C."/>
            <person name="Tang Y."/>
        </authorList>
    </citation>
    <scope>FUNCTION</scope>
</reference>
<reference key="8">
    <citation type="journal article" date="2013" name="Elife">
        <title>Hypothemycin, a fungal natural product, identifies therapeutic targets in Trypanosoma brucei [corrected].</title>
        <authorList>
            <person name="Nishino M."/>
            <person name="Choy J.W."/>
            <person name="Gushwa N.N."/>
            <person name="Oses-Prieto J.A."/>
            <person name="Koupparis K."/>
            <person name="Burlingame A.L."/>
            <person name="Renslo A.R."/>
            <person name="McKerrow J.H."/>
            <person name="Taunton J."/>
        </authorList>
    </citation>
    <scope>BIOTECHNOLOGY</scope>
</reference>
<reference key="9">
    <citation type="journal article" date="2013" name="J. Agric. Food Chem.">
        <title>Antifungal activity of hypothemycin against Peronophythora litchii in vitro and in vivo.</title>
        <authorList>
            <person name="Xu L."/>
            <person name="Xue J."/>
            <person name="Wu P."/>
            <person name="Wang D."/>
            <person name="Lin L."/>
            <person name="Jiang Y."/>
            <person name="Duan X."/>
            <person name="Wei X."/>
        </authorList>
    </citation>
    <scope>BIOTECHNOLOGY</scope>
</reference>
<reference key="10">
    <citation type="journal article" date="2015" name="Int. Immunopharmacol.">
        <title>Hypothemycin inhibits tumor necrosis factor-alpha production by tristetraprolin-dependent down-regulation of mRNA stability in lipopolysaccharide-stimulated macrophages.</title>
        <authorList>
            <person name="Park K.H."/>
            <person name="Yoon Y.D."/>
            <person name="Kang M.R."/>
            <person name="Yun J."/>
            <person name="Oh S.J."/>
            <person name="Lee C.W."/>
            <person name="Lee M.Y."/>
            <person name="Han S.B."/>
            <person name="Kim Y."/>
            <person name="Kang J.S."/>
        </authorList>
    </citation>
    <scope>BIOTECHNOLOGY</scope>
</reference>
<evidence type="ECO:0000250" key="1">
    <source>
        <dbReference type="UniProtKB" id="H3JQW0"/>
    </source>
</evidence>
<evidence type="ECO:0000269" key="2">
    <source>
    </source>
</evidence>
<evidence type="ECO:0000269" key="3">
    <source>
    </source>
</evidence>
<evidence type="ECO:0000269" key="4">
    <source>
    </source>
</evidence>
<evidence type="ECO:0000269" key="5">
    <source>
    </source>
</evidence>
<evidence type="ECO:0000269" key="6">
    <source>
    </source>
</evidence>
<evidence type="ECO:0000269" key="7">
    <source>
    </source>
</evidence>
<evidence type="ECO:0000269" key="8">
    <source>
    </source>
</evidence>
<evidence type="ECO:0000269" key="9">
    <source>
    </source>
</evidence>
<evidence type="ECO:0000269" key="10">
    <source>
    </source>
</evidence>
<evidence type="ECO:0000269" key="11">
    <source>
    </source>
</evidence>
<evidence type="ECO:0000303" key="12">
    <source>
    </source>
</evidence>
<evidence type="ECO:0000305" key="13"/>
<accession>B3FWS3</accession>
<gene>
    <name evidence="12" type="primary">hpm7</name>
</gene>
<sequence length="602" mass="67806">MTRAILPDVSPDSIDPQFLEEKYDQERLKRINAAGYAKYSEVGDGELERFKVTHRLEDVASSREPVSVDTDVVIIGAGYAGILTAVRLVQNGILNFRIVEKGNGFGGTWYWNQYPGAQCDVESYIYMPLLEETGYVPTERYARGPEILKHINLIAKKWELAPKTHFQSEVSAADWTADRWTVKTRQGDEFRSRYLVTAIGPFHRPKLPGVPGINSFKGNTFHSSGWDYEASGGSATEKLTKFSDKTIGIIGTGATAVQMLPFVANSAKEVLVFQRTPAPVNVRNNGPTPPDFAKFLEPGWQLRRMDNFNKIYTGEPIDTSIVSEEWLSATLQVLFGTESDKPSDPAELEQLLARTDFQVMERIRRRVDETIKDPVTREQLKPWYATICKRPCFHDEYLECFNRPNVRLVDTDGKGVDRITEDSVVVDGKEHHVDALVFCTGFEYLSGVDRHGGFTVTGKDGVTLTERWTPGPSTYHGLYVHGFPNFFCLQTAQAGTNPNFMYTATTGSTQIGHVIAECLKDGVREVQPTKQAEDDWVKMILEGGRGMMHLMRNCTPGYMNNDGNLDEKTARRMFYPGGPTAWRKLLEAWREKGDFEGLQRTY</sequence>
<dbReference type="EC" id="1.14.13.-" evidence="13"/>
<dbReference type="EMBL" id="EU520417">
    <property type="protein sequence ID" value="ACD39757.1"/>
    <property type="molecule type" value="Genomic_DNA"/>
</dbReference>
<dbReference type="EMBL" id="EU520418">
    <property type="protein sequence ID" value="ACD39766.1"/>
    <property type="molecule type" value="Genomic_DNA"/>
</dbReference>
<dbReference type="SMR" id="B3FWS3"/>
<dbReference type="GO" id="GO:0004497">
    <property type="term" value="F:monooxygenase activity"/>
    <property type="evidence" value="ECO:0007669"/>
    <property type="project" value="UniProtKB-KW"/>
</dbReference>
<dbReference type="Gene3D" id="3.50.50.60">
    <property type="entry name" value="FAD/NAD(P)-binding domain"/>
    <property type="match status" value="2"/>
</dbReference>
<dbReference type="InterPro" id="IPR050775">
    <property type="entry name" value="FAD-binding_Monooxygenases"/>
</dbReference>
<dbReference type="InterPro" id="IPR036188">
    <property type="entry name" value="FAD/NAD-bd_sf"/>
</dbReference>
<dbReference type="PANTHER" id="PTHR43098:SF4">
    <property type="entry name" value="BLR3857 PROTEIN"/>
    <property type="match status" value="1"/>
</dbReference>
<dbReference type="PANTHER" id="PTHR43098">
    <property type="entry name" value="L-ORNITHINE N(5)-MONOOXYGENASE-RELATED"/>
    <property type="match status" value="1"/>
</dbReference>
<dbReference type="Pfam" id="PF13738">
    <property type="entry name" value="Pyr_redox_3"/>
    <property type="match status" value="1"/>
</dbReference>
<dbReference type="PRINTS" id="PR00411">
    <property type="entry name" value="PNDRDTASEI"/>
</dbReference>
<dbReference type="SUPFAM" id="SSF51905">
    <property type="entry name" value="FAD/NAD(P)-binding domain"/>
    <property type="match status" value="1"/>
</dbReference>
<keyword id="KW-0274">FAD</keyword>
<keyword id="KW-0285">Flavoprotein</keyword>
<keyword id="KW-0503">Monooxygenase</keyword>
<keyword id="KW-0521">NADP</keyword>
<keyword id="KW-0560">Oxidoreductase</keyword>
<proteinExistence type="evidence at protein level"/>
<name>HPM7_HYPSB</name>